<feature type="chain" id="PRO_1000140104" description="Probable L-ascorbate-6-phosphate lactonase UlaG">
    <location>
        <begin position="1"/>
        <end position="354"/>
    </location>
</feature>
<organism>
    <name type="scientific">Salmonella heidelberg (strain SL476)</name>
    <dbReference type="NCBI Taxonomy" id="454169"/>
    <lineage>
        <taxon>Bacteria</taxon>
        <taxon>Pseudomonadati</taxon>
        <taxon>Pseudomonadota</taxon>
        <taxon>Gammaproteobacteria</taxon>
        <taxon>Enterobacterales</taxon>
        <taxon>Enterobacteriaceae</taxon>
        <taxon>Salmonella</taxon>
    </lineage>
</organism>
<reference key="1">
    <citation type="journal article" date="2011" name="J. Bacteriol.">
        <title>Comparative genomics of 28 Salmonella enterica isolates: evidence for CRISPR-mediated adaptive sublineage evolution.</title>
        <authorList>
            <person name="Fricke W.F."/>
            <person name="Mammel M.K."/>
            <person name="McDermott P.F."/>
            <person name="Tartera C."/>
            <person name="White D.G."/>
            <person name="Leclerc J.E."/>
            <person name="Ravel J."/>
            <person name="Cebula T.A."/>
        </authorList>
    </citation>
    <scope>NUCLEOTIDE SEQUENCE [LARGE SCALE GENOMIC DNA]</scope>
    <source>
        <strain>SL476</strain>
    </source>
</reference>
<comment type="function">
    <text evidence="1">Probably catalyzes the hydrolysis of L-ascorbate-6-P into 3-keto-L-gulonate-6-P. Is essential for L-ascorbate utilization under anaerobic conditions.</text>
</comment>
<comment type="catalytic activity">
    <reaction evidence="1">
        <text>L-ascorbate 6-phosphate + H2O = 3-dehydro-L-gulonate 6-phosphate</text>
        <dbReference type="Rhea" id="RHEA:28803"/>
        <dbReference type="ChEBI" id="CHEBI:15377"/>
        <dbReference type="ChEBI" id="CHEBI:58774"/>
        <dbReference type="ChEBI" id="CHEBI:61698"/>
    </reaction>
</comment>
<comment type="cofactor">
    <cofactor evidence="1">
        <name>a divalent metal cation</name>
        <dbReference type="ChEBI" id="CHEBI:60240"/>
    </cofactor>
</comment>
<comment type="pathway">
    <text evidence="1">Cofactor degradation; L-ascorbate degradation; D-xylulose 5-phosphate from L-ascorbate: step 1/4.</text>
</comment>
<comment type="subcellular location">
    <subcellularLocation>
        <location evidence="1">Cytoplasm</location>
    </subcellularLocation>
</comment>
<comment type="induction">
    <text evidence="1">Induced by L-ascorbate. Repressed by UlaR.</text>
</comment>
<comment type="similarity">
    <text evidence="1">Belongs to the UlaG family.</text>
</comment>
<sequence>MSKVQSITRESWILSTFPEWGSWLNEEIEQEQVAPGTFAMWWLGCTGIWLKSEGGTNVCVDFWCGTGKQSHGNPLMKTGHQMQRMAGVKKLQPNLRTTPFVLDPFAIRQIDAVLATHDHNDHIDVNVAAAVMQNCADNVPFIGPQTCVDLWVGWGVPKERCIVVKPGDVVKVKDIEIHALDAFDRTALITLPADQKAAGVLPDGMDVRAVNYLFKTPGGNLYHSGDSHYSNYYAKHGNEHQIDVALGSYGENPRGITDKMTSADILRMAESLNTKVVIPFHHDIWSNFQADPQEIRVLWEMKKDRLKYGFKPFIWQVGGKFTWPLDKDNFEYHYPRGFDDCFTIEPDLPFKSFL</sequence>
<proteinExistence type="inferred from homology"/>
<keyword id="KW-0963">Cytoplasm</keyword>
<keyword id="KW-0378">Hydrolase</keyword>
<evidence type="ECO:0000255" key="1">
    <source>
        <dbReference type="HAMAP-Rule" id="MF_01266"/>
    </source>
</evidence>
<dbReference type="EC" id="3.1.1.-" evidence="1"/>
<dbReference type="EMBL" id="CP001120">
    <property type="protein sequence ID" value="ACF67914.1"/>
    <property type="molecule type" value="Genomic_DNA"/>
</dbReference>
<dbReference type="RefSeq" id="WP_000049164.1">
    <property type="nucleotide sequence ID" value="NC_011083.1"/>
</dbReference>
<dbReference type="SMR" id="B4TFC6"/>
<dbReference type="KEGG" id="seh:SeHA_C4800"/>
<dbReference type="HOGENOM" id="CLU_074775_0_0_6"/>
<dbReference type="UniPathway" id="UPA00263">
    <property type="reaction ID" value="UER00377"/>
</dbReference>
<dbReference type="Proteomes" id="UP000001866">
    <property type="component" value="Chromosome"/>
</dbReference>
<dbReference type="GO" id="GO:0005737">
    <property type="term" value="C:cytoplasm"/>
    <property type="evidence" value="ECO:0007669"/>
    <property type="project" value="UniProtKB-SubCell"/>
</dbReference>
<dbReference type="GO" id="GO:0035460">
    <property type="term" value="F:L-ascorbate 6-phosphate lactonase activity"/>
    <property type="evidence" value="ECO:0007669"/>
    <property type="project" value="InterPro"/>
</dbReference>
<dbReference type="GO" id="GO:0030145">
    <property type="term" value="F:manganese ion binding"/>
    <property type="evidence" value="ECO:0007669"/>
    <property type="project" value="InterPro"/>
</dbReference>
<dbReference type="GO" id="GO:0019854">
    <property type="term" value="P:L-ascorbic acid catabolic process"/>
    <property type="evidence" value="ECO:0007669"/>
    <property type="project" value="UniProtKB-UniRule"/>
</dbReference>
<dbReference type="CDD" id="cd16284">
    <property type="entry name" value="UlaG-like_MBL-fold"/>
    <property type="match status" value="1"/>
</dbReference>
<dbReference type="FunFam" id="3.60.15.10:FF:000004">
    <property type="entry name" value="Probable L-ascorbate-6-phosphate lactonase UlaG"/>
    <property type="match status" value="1"/>
</dbReference>
<dbReference type="Gene3D" id="3.60.15.10">
    <property type="entry name" value="Ribonuclease Z/Hydroxyacylglutathione hydrolase-like"/>
    <property type="match status" value="1"/>
</dbReference>
<dbReference type="HAMAP" id="MF_01266">
    <property type="entry name" value="UlaG"/>
    <property type="match status" value="1"/>
</dbReference>
<dbReference type="InterPro" id="IPR023951">
    <property type="entry name" value="L-ascorbate_6P_UlaG"/>
</dbReference>
<dbReference type="InterPro" id="IPR001279">
    <property type="entry name" value="Metallo-B-lactamas"/>
</dbReference>
<dbReference type="InterPro" id="IPR036866">
    <property type="entry name" value="RibonucZ/Hydroxyglut_hydro"/>
</dbReference>
<dbReference type="InterPro" id="IPR048021">
    <property type="entry name" value="UlaG-like_MBL-fold"/>
</dbReference>
<dbReference type="InterPro" id="IPR050114">
    <property type="entry name" value="UPF0173_UPF0282_UlaG_hydrolase"/>
</dbReference>
<dbReference type="NCBIfam" id="NF008688">
    <property type="entry name" value="PRK11709.1"/>
    <property type="match status" value="1"/>
</dbReference>
<dbReference type="PANTHER" id="PTHR43546:SF9">
    <property type="entry name" value="L-ASCORBATE-6-PHOSPHATE LACTONASE ULAG-RELATED"/>
    <property type="match status" value="1"/>
</dbReference>
<dbReference type="PANTHER" id="PTHR43546">
    <property type="entry name" value="UPF0173 METAL-DEPENDENT HYDROLASE MJ1163-RELATED"/>
    <property type="match status" value="1"/>
</dbReference>
<dbReference type="Pfam" id="PF12706">
    <property type="entry name" value="Lactamase_B_2"/>
    <property type="match status" value="1"/>
</dbReference>
<dbReference type="SUPFAM" id="SSF56281">
    <property type="entry name" value="Metallo-hydrolase/oxidoreductase"/>
    <property type="match status" value="1"/>
</dbReference>
<gene>
    <name evidence="1" type="primary">ulaG</name>
    <name type="ordered locus">SeHA_C4800</name>
</gene>
<protein>
    <recommendedName>
        <fullName evidence="1">Probable L-ascorbate-6-phosphate lactonase UlaG</fullName>
        <ecNumber evidence="1">3.1.1.-</ecNumber>
    </recommendedName>
    <alternativeName>
        <fullName evidence="1">L-ascorbate utilization protein G</fullName>
    </alternativeName>
</protein>
<accession>B4TFC6</accession>
<name>ULAG_SALHS</name>